<comment type="function">
    <text evidence="1">Possible role in granule neuron development.</text>
</comment>
<comment type="subcellular location">
    <subcellularLocation>
        <location evidence="1">Cytoplasm</location>
    </subcellularLocation>
    <subcellularLocation>
        <location evidence="4">Membrane</location>
        <topology evidence="4">Single-pass type II membrane protein</topology>
    </subcellularLocation>
</comment>
<comment type="similarity">
    <text evidence="4">Belongs to the AB hydrolase superfamily. ABHD14 family.</text>
</comment>
<comment type="caution">
    <text evidence="4">It is uncertain whether Met-1 or Met-30 is the initiator.</text>
</comment>
<comment type="sequence caution" evidence="4">
    <conflict type="erroneous initiation">
        <sequence resource="EMBL-CDS" id="AAQ88568"/>
    </conflict>
</comment>
<reference key="1">
    <citation type="journal article" date="2003" name="Genome Res.">
        <title>The secreted protein discovery initiative (SPDI), a large-scale effort to identify novel human secreted and transmembrane proteins: a bioinformatics assessment.</title>
        <authorList>
            <person name="Clark H.F."/>
            <person name="Gurney A.L."/>
            <person name="Abaya E."/>
            <person name="Baker K."/>
            <person name="Baldwin D.T."/>
            <person name="Brush J."/>
            <person name="Chen J."/>
            <person name="Chow B."/>
            <person name="Chui C."/>
            <person name="Crowley C."/>
            <person name="Currell B."/>
            <person name="Deuel B."/>
            <person name="Dowd P."/>
            <person name="Eaton D."/>
            <person name="Foster J.S."/>
            <person name="Grimaldi C."/>
            <person name="Gu Q."/>
            <person name="Hass P.E."/>
            <person name="Heldens S."/>
            <person name="Huang A."/>
            <person name="Kim H.S."/>
            <person name="Klimowski L."/>
            <person name="Jin Y."/>
            <person name="Johnson S."/>
            <person name="Lee J."/>
            <person name="Lewis L."/>
            <person name="Liao D."/>
            <person name="Mark M.R."/>
            <person name="Robbie E."/>
            <person name="Sanchez C."/>
            <person name="Schoenfeld J."/>
            <person name="Seshagiri S."/>
            <person name="Simmons L."/>
            <person name="Singh J."/>
            <person name="Smith V."/>
            <person name="Stinson J."/>
            <person name="Vagts A."/>
            <person name="Vandlen R.L."/>
            <person name="Watanabe C."/>
            <person name="Wieand D."/>
            <person name="Woods K."/>
            <person name="Xie M.-H."/>
            <person name="Yansura D.G."/>
            <person name="Yi S."/>
            <person name="Yu G."/>
            <person name="Yuan J."/>
            <person name="Zhang M."/>
            <person name="Zhang Z."/>
            <person name="Goddard A.D."/>
            <person name="Wood W.I."/>
            <person name="Godowski P.J."/>
            <person name="Gray A.M."/>
        </authorList>
    </citation>
    <scope>NUCLEOTIDE SEQUENCE [LARGE SCALE MRNA]</scope>
</reference>
<reference key="2">
    <citation type="journal article" date="2007" name="BMC Genomics">
        <title>The full-ORF clone resource of the German cDNA consortium.</title>
        <authorList>
            <person name="Bechtel S."/>
            <person name="Rosenfelder H."/>
            <person name="Duda A."/>
            <person name="Schmidt C.P."/>
            <person name="Ernst U."/>
            <person name="Wellenreuther R."/>
            <person name="Mehrle A."/>
            <person name="Schuster C."/>
            <person name="Bahr A."/>
            <person name="Bloecker H."/>
            <person name="Heubner D."/>
            <person name="Hoerlein A."/>
            <person name="Michel G."/>
            <person name="Wedler H."/>
            <person name="Koehrer K."/>
            <person name="Ottenwaelder B."/>
            <person name="Poustka A."/>
            <person name="Wiemann S."/>
            <person name="Schupp I."/>
        </authorList>
    </citation>
    <scope>NUCLEOTIDE SEQUENCE [LARGE SCALE MRNA]</scope>
    <source>
        <tissue>Brain</tissue>
    </source>
</reference>
<reference key="3">
    <citation type="journal article" date="2004" name="Genome Res.">
        <title>The status, quality, and expansion of the NIH full-length cDNA project: the Mammalian Gene Collection (MGC).</title>
        <authorList>
            <consortium name="The MGC Project Team"/>
        </authorList>
    </citation>
    <scope>NUCLEOTIDE SEQUENCE [LARGE SCALE MRNA]</scope>
    <scope>VARIANT GLN-32</scope>
    <source>
        <tissue>Lymph</tissue>
    </source>
</reference>
<sequence length="271" mass="29765">MVGALCGCWFRLGGARPLIPLGPTVVQTSMSRSQVALLGLSLLLMLLLYVGLPGPPEQTSCLWGDPNVTVLAGLTPGNSPIFYREVLPLNQAHRVEVVLLHGKAFNSHTWEQLGTLQLLSQRGYRAVALDLPGFGNSAPSKEASTEAGRAALLERALRDLEVQNAVLVSPSLSGHYALPFLMRGHHQLHGFVPIAPTSTQNYTQEQFWAVKTPTLILYGELDHILARESLRQLRHLPNHSVVKLRNAGHACYLHKPQDFHLVLLAFLDHLP</sequence>
<evidence type="ECO:0000250" key="1"/>
<evidence type="ECO:0000255" key="2"/>
<evidence type="ECO:0000269" key="3">
    <source>
    </source>
</evidence>
<evidence type="ECO:0000305" key="4"/>
<evidence type="ECO:0000312" key="5">
    <source>
        <dbReference type="HGNC" id="HGNC:24538"/>
    </source>
</evidence>
<dbReference type="EC" id="3.-.-.-"/>
<dbReference type="EMBL" id="AY358201">
    <property type="protein sequence ID" value="AAQ88568.1"/>
    <property type="status" value="ALT_INIT"/>
    <property type="molecule type" value="mRNA"/>
</dbReference>
<dbReference type="EMBL" id="AL050015">
    <property type="protein sequence ID" value="CAB43237.2"/>
    <property type="molecule type" value="mRNA"/>
</dbReference>
<dbReference type="EMBL" id="BC002571">
    <property type="protein sequence ID" value="AAH02571.1"/>
    <property type="molecule type" value="mRNA"/>
</dbReference>
<dbReference type="CCDS" id="CCDS2843.1"/>
<dbReference type="PIR" id="T08702">
    <property type="entry name" value="T08702"/>
</dbReference>
<dbReference type="RefSeq" id="NP_056222.2">
    <property type="nucleotide sequence ID" value="NM_015407.5"/>
</dbReference>
<dbReference type="SMR" id="Q9BUJ0"/>
<dbReference type="BioGRID" id="117383">
    <property type="interactions" value="74"/>
</dbReference>
<dbReference type="FunCoup" id="Q9BUJ0">
    <property type="interactions" value="922"/>
</dbReference>
<dbReference type="IntAct" id="Q9BUJ0">
    <property type="interactions" value="54"/>
</dbReference>
<dbReference type="MINT" id="Q9BUJ0"/>
<dbReference type="STRING" id="9606.ENSP00000273596"/>
<dbReference type="ESTHER" id="human-ABHD14A">
    <property type="family name" value="CIB-CCG1-interacting-factor-B"/>
</dbReference>
<dbReference type="MEROPS" id="S33.981"/>
<dbReference type="GlyCosmos" id="Q9BUJ0">
    <property type="glycosylation" value="2 sites, No reported glycans"/>
</dbReference>
<dbReference type="GlyGen" id="Q9BUJ0">
    <property type="glycosylation" value="5 sites, 1 N-linked glycan (1 site)"/>
</dbReference>
<dbReference type="iPTMnet" id="Q9BUJ0"/>
<dbReference type="PhosphoSitePlus" id="Q9BUJ0"/>
<dbReference type="SwissPalm" id="Q9BUJ0"/>
<dbReference type="BioMuta" id="ABHD14A"/>
<dbReference type="DMDM" id="143955271"/>
<dbReference type="jPOST" id="Q9BUJ0"/>
<dbReference type="MassIVE" id="Q9BUJ0"/>
<dbReference type="PaxDb" id="9606-ENSP00000273596"/>
<dbReference type="PeptideAtlas" id="Q9BUJ0"/>
<dbReference type="ProteomicsDB" id="79089"/>
<dbReference type="Antibodypedia" id="51597">
    <property type="antibodies" value="128 antibodies from 23 providers"/>
</dbReference>
<dbReference type="DNASU" id="25864"/>
<dbReference type="Ensembl" id="ENST00000273596.8">
    <property type="protein sequence ID" value="ENSP00000273596.3"/>
    <property type="gene ID" value="ENSG00000248487.10"/>
</dbReference>
<dbReference type="GeneID" id="25864"/>
<dbReference type="KEGG" id="hsa:25864"/>
<dbReference type="MANE-Select" id="ENST00000273596.8">
    <property type="protein sequence ID" value="ENSP00000273596.3"/>
    <property type="RefSeq nucleotide sequence ID" value="NM_015407.5"/>
    <property type="RefSeq protein sequence ID" value="NP_056222.2"/>
</dbReference>
<dbReference type="UCSC" id="uc003dco.4">
    <property type="organism name" value="human"/>
</dbReference>
<dbReference type="AGR" id="HGNC:24538"/>
<dbReference type="CTD" id="25864"/>
<dbReference type="DisGeNET" id="25864"/>
<dbReference type="GeneCards" id="ABHD14A"/>
<dbReference type="HGNC" id="HGNC:24538">
    <property type="gene designation" value="ABHD14A"/>
</dbReference>
<dbReference type="HPA" id="ENSG00000248487">
    <property type="expression patterns" value="Low tissue specificity"/>
</dbReference>
<dbReference type="MIM" id="618771">
    <property type="type" value="gene"/>
</dbReference>
<dbReference type="neXtProt" id="NX_Q9BUJ0"/>
<dbReference type="OpenTargets" id="ENSG00000248487"/>
<dbReference type="PharmGKB" id="PA142672659"/>
<dbReference type="VEuPathDB" id="HostDB:ENSG00000248487"/>
<dbReference type="eggNOG" id="ENOG502QR0B">
    <property type="taxonomic scope" value="Eukaryota"/>
</dbReference>
<dbReference type="GeneTree" id="ENSGT00940000161296"/>
<dbReference type="HOGENOM" id="CLU_020336_28_2_1"/>
<dbReference type="InParanoid" id="Q9BUJ0"/>
<dbReference type="OrthoDB" id="284184at2759"/>
<dbReference type="PAN-GO" id="Q9BUJ0">
    <property type="GO annotations" value="1 GO annotation based on evolutionary models"/>
</dbReference>
<dbReference type="PhylomeDB" id="Q9BUJ0"/>
<dbReference type="TreeFam" id="TF314465"/>
<dbReference type="PathwayCommons" id="Q9BUJ0"/>
<dbReference type="SignaLink" id="Q9BUJ0"/>
<dbReference type="BioGRID-ORCS" id="25864">
    <property type="hits" value="11 hits in 1146 CRISPR screens"/>
</dbReference>
<dbReference type="GenomeRNAi" id="25864"/>
<dbReference type="Pharos" id="Q9BUJ0">
    <property type="development level" value="Tdark"/>
</dbReference>
<dbReference type="PRO" id="PR:Q9BUJ0"/>
<dbReference type="Proteomes" id="UP000005640">
    <property type="component" value="Chromosome 3"/>
</dbReference>
<dbReference type="RNAct" id="Q9BUJ0">
    <property type="molecule type" value="protein"/>
</dbReference>
<dbReference type="Bgee" id="ENSG00000248487">
    <property type="expression patterns" value="Expressed in right hemisphere of cerebellum and 199 other cell types or tissues"/>
</dbReference>
<dbReference type="ExpressionAtlas" id="Q9BUJ0">
    <property type="expression patterns" value="baseline and differential"/>
</dbReference>
<dbReference type="GO" id="GO:0005737">
    <property type="term" value="C:cytoplasm"/>
    <property type="evidence" value="ECO:0000318"/>
    <property type="project" value="GO_Central"/>
</dbReference>
<dbReference type="GO" id="GO:0016020">
    <property type="term" value="C:membrane"/>
    <property type="evidence" value="ECO:0007669"/>
    <property type="project" value="UniProtKB-SubCell"/>
</dbReference>
<dbReference type="GO" id="GO:0016787">
    <property type="term" value="F:hydrolase activity"/>
    <property type="evidence" value="ECO:0007669"/>
    <property type="project" value="UniProtKB-KW"/>
</dbReference>
<dbReference type="FunFam" id="3.40.50.1820:FF:000093">
    <property type="entry name" value="protein ABHD14A isoform X1"/>
    <property type="match status" value="1"/>
</dbReference>
<dbReference type="Gene3D" id="3.40.50.1820">
    <property type="entry name" value="alpha/beta hydrolase"/>
    <property type="match status" value="1"/>
</dbReference>
<dbReference type="InterPro" id="IPR000073">
    <property type="entry name" value="AB_hydrolase_1"/>
</dbReference>
<dbReference type="InterPro" id="IPR029058">
    <property type="entry name" value="AB_hydrolase_fold"/>
</dbReference>
<dbReference type="PANTHER" id="PTHR46197:SF1">
    <property type="entry name" value="PROTEIN ABHD14A"/>
    <property type="match status" value="1"/>
</dbReference>
<dbReference type="PANTHER" id="PTHR46197">
    <property type="entry name" value="PROTEIN ABHD14B-LIKE"/>
    <property type="match status" value="1"/>
</dbReference>
<dbReference type="Pfam" id="PF12697">
    <property type="entry name" value="Abhydrolase_6"/>
    <property type="match status" value="1"/>
</dbReference>
<dbReference type="SUPFAM" id="SSF53474">
    <property type="entry name" value="alpha/beta-Hydrolases"/>
    <property type="match status" value="1"/>
</dbReference>
<accession>Q9BUJ0</accession>
<accession>Q6UXU8</accession>
<accession>Q9Y3T7</accession>
<feature type="chain" id="PRO_0000282285" description="Protein ABHD14A">
    <location>
        <begin position="1"/>
        <end position="271"/>
    </location>
</feature>
<feature type="transmembrane region" description="Helical; Signal-anchor for type II membrane protein" evidence="2">
    <location>
        <begin position="35"/>
        <end position="55"/>
    </location>
</feature>
<feature type="active site" description="Charge relay system" evidence="1">
    <location>
        <position position="171"/>
    </location>
</feature>
<feature type="active site" description="Charge relay system" evidence="1">
    <location>
        <position position="222"/>
    </location>
</feature>
<feature type="active site" description="Charge relay system" evidence="1">
    <location>
        <position position="249"/>
    </location>
</feature>
<feature type="glycosylation site" description="N-linked (GlcNAc...) asparagine" evidence="2">
    <location>
        <position position="67"/>
    </location>
</feature>
<feature type="glycosylation site" description="N-linked (GlcNAc...) asparagine" evidence="2">
    <location>
        <position position="201"/>
    </location>
</feature>
<feature type="sequence variant" id="VAR_031390" description="In dbSNP:rs17849626." evidence="3">
    <original>R</original>
    <variation>Q</variation>
    <location>
        <position position="32"/>
    </location>
</feature>
<feature type="sequence variant" id="VAR_031391" description="In dbSNP:rs404527.">
    <original>C</original>
    <variation>W</variation>
    <location>
        <position position="61"/>
    </location>
</feature>
<feature type="sequence conflict" description="In Ref. 2; CAB43237." evidence="4" ref="2">
    <original>D</original>
    <variation>N</variation>
    <location>
        <position position="159"/>
    </location>
</feature>
<protein>
    <recommendedName>
        <fullName evidence="4">Protein ABHD14A</fullName>
        <ecNumber>3.-.-.-</ecNumber>
    </recommendedName>
    <alternativeName>
        <fullName evidence="4">Alpha/beta hydrolase domain-containing protein 14A</fullName>
        <shortName evidence="5">Abhydrolase domain-containing protein 14A</shortName>
    </alternativeName>
</protein>
<keyword id="KW-0963">Cytoplasm</keyword>
<keyword id="KW-0325">Glycoprotein</keyword>
<keyword id="KW-0378">Hydrolase</keyword>
<keyword id="KW-0472">Membrane</keyword>
<keyword id="KW-1267">Proteomics identification</keyword>
<keyword id="KW-1185">Reference proteome</keyword>
<keyword id="KW-0735">Signal-anchor</keyword>
<keyword id="KW-0812">Transmembrane</keyword>
<keyword id="KW-1133">Transmembrane helix</keyword>
<name>ABHEA_HUMAN</name>
<proteinExistence type="evidence at protein level"/>
<gene>
    <name evidence="5" type="primary">ABHD14A</name>
    <name type="ORF">UNQ1913/PRO4373</name>
</gene>
<organism>
    <name type="scientific">Homo sapiens</name>
    <name type="common">Human</name>
    <dbReference type="NCBI Taxonomy" id="9606"/>
    <lineage>
        <taxon>Eukaryota</taxon>
        <taxon>Metazoa</taxon>
        <taxon>Chordata</taxon>
        <taxon>Craniata</taxon>
        <taxon>Vertebrata</taxon>
        <taxon>Euteleostomi</taxon>
        <taxon>Mammalia</taxon>
        <taxon>Eutheria</taxon>
        <taxon>Euarchontoglires</taxon>
        <taxon>Primates</taxon>
        <taxon>Haplorrhini</taxon>
        <taxon>Catarrhini</taxon>
        <taxon>Hominidae</taxon>
        <taxon>Homo</taxon>
    </lineage>
</organism>